<name>KCY_STRU0</name>
<reference key="1">
    <citation type="journal article" date="2009" name="BMC Genomics">
        <title>Evidence for niche adaptation in the genome of the bovine pathogen Streptococcus uberis.</title>
        <authorList>
            <person name="Ward P.N."/>
            <person name="Holden M.T.G."/>
            <person name="Leigh J.A."/>
            <person name="Lennard N."/>
            <person name="Bignell A."/>
            <person name="Barron A."/>
            <person name="Clark L."/>
            <person name="Quail M.A."/>
            <person name="Woodward J."/>
            <person name="Barrell B.G."/>
            <person name="Egan S.A."/>
            <person name="Field T.R."/>
            <person name="Maskell D."/>
            <person name="Kehoe M."/>
            <person name="Dowson C.G."/>
            <person name="Chanter N."/>
            <person name="Whatmore A.M."/>
            <person name="Bentley S.D."/>
            <person name="Parkhill J."/>
        </authorList>
    </citation>
    <scope>NUCLEOTIDE SEQUENCE [LARGE SCALE GENOMIC DNA]</scope>
    <source>
        <strain>ATCC BAA-854 / 0140J</strain>
    </source>
</reference>
<dbReference type="EC" id="2.7.4.25" evidence="1"/>
<dbReference type="EMBL" id="AM946015">
    <property type="protein sequence ID" value="CAR41619.1"/>
    <property type="molecule type" value="Genomic_DNA"/>
</dbReference>
<dbReference type="RefSeq" id="WP_012658227.1">
    <property type="nucleotide sequence ID" value="NC_012004.1"/>
</dbReference>
<dbReference type="SMR" id="B9DU39"/>
<dbReference type="STRING" id="218495.SUB0710"/>
<dbReference type="GeneID" id="93825994"/>
<dbReference type="KEGG" id="sub:SUB0710"/>
<dbReference type="eggNOG" id="COG0283">
    <property type="taxonomic scope" value="Bacteria"/>
</dbReference>
<dbReference type="HOGENOM" id="CLU_079959_0_2_9"/>
<dbReference type="OrthoDB" id="9807434at2"/>
<dbReference type="Proteomes" id="UP000000449">
    <property type="component" value="Chromosome"/>
</dbReference>
<dbReference type="GO" id="GO:0005829">
    <property type="term" value="C:cytosol"/>
    <property type="evidence" value="ECO:0007669"/>
    <property type="project" value="TreeGrafter"/>
</dbReference>
<dbReference type="GO" id="GO:0005524">
    <property type="term" value="F:ATP binding"/>
    <property type="evidence" value="ECO:0007669"/>
    <property type="project" value="UniProtKB-UniRule"/>
</dbReference>
<dbReference type="GO" id="GO:0036430">
    <property type="term" value="F:CMP kinase activity"/>
    <property type="evidence" value="ECO:0007669"/>
    <property type="project" value="RHEA"/>
</dbReference>
<dbReference type="GO" id="GO:0036431">
    <property type="term" value="F:dCMP kinase activity"/>
    <property type="evidence" value="ECO:0007669"/>
    <property type="project" value="RHEA"/>
</dbReference>
<dbReference type="GO" id="GO:0015949">
    <property type="term" value="P:nucleobase-containing small molecule interconversion"/>
    <property type="evidence" value="ECO:0007669"/>
    <property type="project" value="TreeGrafter"/>
</dbReference>
<dbReference type="GO" id="GO:0006220">
    <property type="term" value="P:pyrimidine nucleotide metabolic process"/>
    <property type="evidence" value="ECO:0007669"/>
    <property type="project" value="UniProtKB-UniRule"/>
</dbReference>
<dbReference type="CDD" id="cd02020">
    <property type="entry name" value="CMPK"/>
    <property type="match status" value="1"/>
</dbReference>
<dbReference type="FunFam" id="3.40.50.300:FF:000484">
    <property type="entry name" value="Cytidylate kinase"/>
    <property type="match status" value="1"/>
</dbReference>
<dbReference type="Gene3D" id="3.40.50.300">
    <property type="entry name" value="P-loop containing nucleotide triphosphate hydrolases"/>
    <property type="match status" value="1"/>
</dbReference>
<dbReference type="HAMAP" id="MF_00238">
    <property type="entry name" value="Cytidyl_kinase_type1"/>
    <property type="match status" value="1"/>
</dbReference>
<dbReference type="InterPro" id="IPR003136">
    <property type="entry name" value="Cytidylate_kin"/>
</dbReference>
<dbReference type="InterPro" id="IPR011994">
    <property type="entry name" value="Cytidylate_kinase_dom"/>
</dbReference>
<dbReference type="InterPro" id="IPR027417">
    <property type="entry name" value="P-loop_NTPase"/>
</dbReference>
<dbReference type="NCBIfam" id="TIGR00017">
    <property type="entry name" value="cmk"/>
    <property type="match status" value="1"/>
</dbReference>
<dbReference type="PANTHER" id="PTHR21299:SF2">
    <property type="entry name" value="CYTIDYLATE KINASE"/>
    <property type="match status" value="1"/>
</dbReference>
<dbReference type="PANTHER" id="PTHR21299">
    <property type="entry name" value="CYTIDYLATE KINASE/PANTOATE-BETA-ALANINE LIGASE"/>
    <property type="match status" value="1"/>
</dbReference>
<dbReference type="Pfam" id="PF02224">
    <property type="entry name" value="Cytidylate_kin"/>
    <property type="match status" value="1"/>
</dbReference>
<dbReference type="SUPFAM" id="SSF52540">
    <property type="entry name" value="P-loop containing nucleoside triphosphate hydrolases"/>
    <property type="match status" value="1"/>
</dbReference>
<sequence>MKAIRIAIDGPASSGKSTVAKIIAKNLGYTYLDTGAMYRCATYIALKNNYSENDISAILKELSEHPITFKKADDGSQLVFLGTEDVTLAIRQNDVTNNVSWVSAIAEIREELVAQQRRIAQDGAIIMDGRDIGTVVLPDAELKIFLIASVDERAERRYRENLEKGIDSDFETLKEEIAARDFKDSHREVSPLKAADDAIVFDTTGVTIQGVVQFIQEKAEKIIDMS</sequence>
<accession>B9DU39</accession>
<proteinExistence type="inferred from homology"/>
<keyword id="KW-0067">ATP-binding</keyword>
<keyword id="KW-0963">Cytoplasm</keyword>
<keyword id="KW-0418">Kinase</keyword>
<keyword id="KW-0547">Nucleotide-binding</keyword>
<keyword id="KW-1185">Reference proteome</keyword>
<keyword id="KW-0808">Transferase</keyword>
<gene>
    <name evidence="1" type="primary">cmk</name>
    <name type="ordered locus">SUB0710</name>
</gene>
<comment type="catalytic activity">
    <reaction evidence="1">
        <text>CMP + ATP = CDP + ADP</text>
        <dbReference type="Rhea" id="RHEA:11600"/>
        <dbReference type="ChEBI" id="CHEBI:30616"/>
        <dbReference type="ChEBI" id="CHEBI:58069"/>
        <dbReference type="ChEBI" id="CHEBI:60377"/>
        <dbReference type="ChEBI" id="CHEBI:456216"/>
        <dbReference type="EC" id="2.7.4.25"/>
    </reaction>
</comment>
<comment type="catalytic activity">
    <reaction evidence="1">
        <text>dCMP + ATP = dCDP + ADP</text>
        <dbReference type="Rhea" id="RHEA:25094"/>
        <dbReference type="ChEBI" id="CHEBI:30616"/>
        <dbReference type="ChEBI" id="CHEBI:57566"/>
        <dbReference type="ChEBI" id="CHEBI:58593"/>
        <dbReference type="ChEBI" id="CHEBI:456216"/>
        <dbReference type="EC" id="2.7.4.25"/>
    </reaction>
</comment>
<comment type="subcellular location">
    <subcellularLocation>
        <location evidence="1">Cytoplasm</location>
    </subcellularLocation>
</comment>
<comment type="similarity">
    <text evidence="1">Belongs to the cytidylate kinase family. Type 1 subfamily.</text>
</comment>
<evidence type="ECO:0000255" key="1">
    <source>
        <dbReference type="HAMAP-Rule" id="MF_00238"/>
    </source>
</evidence>
<feature type="chain" id="PRO_1000125303" description="Cytidylate kinase">
    <location>
        <begin position="1"/>
        <end position="226"/>
    </location>
</feature>
<feature type="binding site" evidence="1">
    <location>
        <begin position="10"/>
        <end position="18"/>
    </location>
    <ligand>
        <name>ATP</name>
        <dbReference type="ChEBI" id="CHEBI:30616"/>
    </ligand>
</feature>
<organism>
    <name type="scientific">Streptococcus uberis (strain ATCC BAA-854 / 0140J)</name>
    <dbReference type="NCBI Taxonomy" id="218495"/>
    <lineage>
        <taxon>Bacteria</taxon>
        <taxon>Bacillati</taxon>
        <taxon>Bacillota</taxon>
        <taxon>Bacilli</taxon>
        <taxon>Lactobacillales</taxon>
        <taxon>Streptococcaceae</taxon>
        <taxon>Streptococcus</taxon>
    </lineage>
</organism>
<protein>
    <recommendedName>
        <fullName evidence="1">Cytidylate kinase</fullName>
        <shortName evidence="1">CK</shortName>
        <ecNumber evidence="1">2.7.4.25</ecNumber>
    </recommendedName>
    <alternativeName>
        <fullName evidence="1">Cytidine monophosphate kinase</fullName>
        <shortName evidence="1">CMP kinase</shortName>
    </alternativeName>
</protein>